<reference key="1">
    <citation type="submission" date="2006-06" db="EMBL/GenBank/DDBJ databases">
        <title>Complete sequence of Pseudoalteromonas atlantica T6c.</title>
        <authorList>
            <consortium name="US DOE Joint Genome Institute"/>
            <person name="Copeland A."/>
            <person name="Lucas S."/>
            <person name="Lapidus A."/>
            <person name="Barry K."/>
            <person name="Detter J.C."/>
            <person name="Glavina del Rio T."/>
            <person name="Hammon N."/>
            <person name="Israni S."/>
            <person name="Dalin E."/>
            <person name="Tice H."/>
            <person name="Pitluck S."/>
            <person name="Saunders E."/>
            <person name="Brettin T."/>
            <person name="Bruce D."/>
            <person name="Han C."/>
            <person name="Tapia R."/>
            <person name="Gilna P."/>
            <person name="Schmutz J."/>
            <person name="Larimer F."/>
            <person name="Land M."/>
            <person name="Hauser L."/>
            <person name="Kyrpides N."/>
            <person name="Kim E."/>
            <person name="Karls A.C."/>
            <person name="Bartlett D."/>
            <person name="Higgins B.P."/>
            <person name="Richardson P."/>
        </authorList>
    </citation>
    <scope>NUCLEOTIDE SEQUENCE [LARGE SCALE GENOMIC DNA]</scope>
    <source>
        <strain>T6c / ATCC BAA-1087</strain>
    </source>
</reference>
<evidence type="ECO:0000255" key="1">
    <source>
        <dbReference type="HAMAP-Rule" id="MF_00286"/>
    </source>
</evidence>
<dbReference type="EMBL" id="CP000388">
    <property type="protein sequence ID" value="ABG41307.1"/>
    <property type="molecule type" value="Genomic_DNA"/>
</dbReference>
<dbReference type="RefSeq" id="WP_011575565.1">
    <property type="nucleotide sequence ID" value="NC_008228.1"/>
</dbReference>
<dbReference type="SMR" id="Q15S31"/>
<dbReference type="STRING" id="342610.Patl_2796"/>
<dbReference type="KEGG" id="pat:Patl_2796"/>
<dbReference type="eggNOG" id="COG1495">
    <property type="taxonomic scope" value="Bacteria"/>
</dbReference>
<dbReference type="HOGENOM" id="CLU_098660_2_0_6"/>
<dbReference type="OrthoDB" id="3711263at2"/>
<dbReference type="Proteomes" id="UP000001981">
    <property type="component" value="Chromosome"/>
</dbReference>
<dbReference type="GO" id="GO:0005886">
    <property type="term" value="C:plasma membrane"/>
    <property type="evidence" value="ECO:0007669"/>
    <property type="project" value="UniProtKB-SubCell"/>
</dbReference>
<dbReference type="GO" id="GO:0009055">
    <property type="term" value="F:electron transfer activity"/>
    <property type="evidence" value="ECO:0007669"/>
    <property type="project" value="UniProtKB-UniRule"/>
</dbReference>
<dbReference type="GO" id="GO:0015035">
    <property type="term" value="F:protein-disulfide reductase activity"/>
    <property type="evidence" value="ECO:0007669"/>
    <property type="project" value="UniProtKB-UniRule"/>
</dbReference>
<dbReference type="GO" id="GO:0006457">
    <property type="term" value="P:protein folding"/>
    <property type="evidence" value="ECO:0007669"/>
    <property type="project" value="InterPro"/>
</dbReference>
<dbReference type="Gene3D" id="1.20.1550.10">
    <property type="entry name" value="DsbB-like"/>
    <property type="match status" value="1"/>
</dbReference>
<dbReference type="HAMAP" id="MF_00286">
    <property type="entry name" value="DsbB"/>
    <property type="match status" value="1"/>
</dbReference>
<dbReference type="InterPro" id="IPR003752">
    <property type="entry name" value="DiS_bond_form_DsbB/BdbC"/>
</dbReference>
<dbReference type="InterPro" id="IPR022920">
    <property type="entry name" value="Disulphide_bond_form_DsbB"/>
</dbReference>
<dbReference type="InterPro" id="IPR050183">
    <property type="entry name" value="DsbB"/>
</dbReference>
<dbReference type="InterPro" id="IPR023380">
    <property type="entry name" value="DsbB-like_sf"/>
</dbReference>
<dbReference type="NCBIfam" id="NF002485">
    <property type="entry name" value="PRK01749.1"/>
    <property type="match status" value="1"/>
</dbReference>
<dbReference type="PANTHER" id="PTHR36570">
    <property type="entry name" value="DISULFIDE BOND FORMATION PROTEIN B"/>
    <property type="match status" value="1"/>
</dbReference>
<dbReference type="PANTHER" id="PTHR36570:SF2">
    <property type="entry name" value="DISULFIDE BOND FORMATION PROTEIN B"/>
    <property type="match status" value="1"/>
</dbReference>
<dbReference type="Pfam" id="PF02600">
    <property type="entry name" value="DsbB"/>
    <property type="match status" value="1"/>
</dbReference>
<dbReference type="SUPFAM" id="SSF158442">
    <property type="entry name" value="DsbB-like"/>
    <property type="match status" value="1"/>
</dbReference>
<organism>
    <name type="scientific">Pseudoalteromonas atlantica (strain T6c / ATCC BAA-1087)</name>
    <dbReference type="NCBI Taxonomy" id="3042615"/>
    <lineage>
        <taxon>Bacteria</taxon>
        <taxon>Pseudomonadati</taxon>
        <taxon>Pseudomonadota</taxon>
        <taxon>Gammaproteobacteria</taxon>
        <taxon>Alteromonadales</taxon>
        <taxon>Alteromonadaceae</taxon>
        <taxon>Paraglaciecola</taxon>
    </lineage>
</organism>
<feature type="chain" id="PRO_0000298381" description="Disulfide bond formation protein B">
    <location>
        <begin position="1"/>
        <end position="171"/>
    </location>
</feature>
<feature type="topological domain" description="Cytoplasmic" evidence="1">
    <location>
        <begin position="1"/>
        <end position="13"/>
    </location>
</feature>
<feature type="transmembrane region" description="Helical" evidence="1">
    <location>
        <begin position="14"/>
        <end position="30"/>
    </location>
</feature>
<feature type="topological domain" description="Periplasmic" evidence="1">
    <location>
        <begin position="31"/>
        <end position="48"/>
    </location>
</feature>
<feature type="transmembrane region" description="Helical" evidence="1">
    <location>
        <begin position="49"/>
        <end position="63"/>
    </location>
</feature>
<feature type="topological domain" description="Cytoplasmic" evidence="1">
    <location>
        <begin position="64"/>
        <end position="70"/>
    </location>
</feature>
<feature type="transmembrane region" description="Helical" evidence="1">
    <location>
        <begin position="71"/>
        <end position="88"/>
    </location>
</feature>
<feature type="topological domain" description="Periplasmic" evidence="1">
    <location>
        <begin position="89"/>
        <end position="144"/>
    </location>
</feature>
<feature type="transmembrane region" description="Helical" evidence="1">
    <location>
        <begin position="145"/>
        <end position="163"/>
    </location>
</feature>
<feature type="topological domain" description="Cytoplasmic" evidence="1">
    <location>
        <begin position="164"/>
        <end position="171"/>
    </location>
</feature>
<feature type="disulfide bond" description="Redox-active" evidence="1">
    <location>
        <begin position="40"/>
        <end position="43"/>
    </location>
</feature>
<feature type="disulfide bond" description="Redox-active" evidence="1">
    <location>
        <begin position="104"/>
        <end position="130"/>
    </location>
</feature>
<keyword id="KW-0997">Cell inner membrane</keyword>
<keyword id="KW-1003">Cell membrane</keyword>
<keyword id="KW-0143">Chaperone</keyword>
<keyword id="KW-1015">Disulfide bond</keyword>
<keyword id="KW-0249">Electron transport</keyword>
<keyword id="KW-0472">Membrane</keyword>
<keyword id="KW-0560">Oxidoreductase</keyword>
<keyword id="KW-0676">Redox-active center</keyword>
<keyword id="KW-0812">Transmembrane</keyword>
<keyword id="KW-1133">Transmembrane helix</keyword>
<keyword id="KW-0813">Transport</keyword>
<name>DSBB_PSEA6</name>
<comment type="function">
    <text evidence="1">Required for disulfide bond formation in some periplasmic proteins. Acts by oxidizing the DsbA protein.</text>
</comment>
<comment type="subcellular location">
    <subcellularLocation>
        <location evidence="1">Cell inner membrane</location>
        <topology evidence="1">Multi-pass membrane protein</topology>
    </subcellularLocation>
</comment>
<comment type="similarity">
    <text evidence="1">Belongs to the DsbB family.</text>
</comment>
<proteinExistence type="inferred from homology"/>
<gene>
    <name evidence="1" type="primary">dsbB</name>
    <name type="ordered locus">Patl_2796</name>
</gene>
<sequence>MTFISNLADTRLAWGLLFLSALVLVAYALFSQHAMGLQPCIMCIYQRTAIFGIMFACVPVLAANNMLTRLFAFTVWGISAIWGGLIAWEHYDIQNAANPFFATCEIVPNFPSWLPLHEWLPNLFAATGDCGNIDWVFMDMSMPQWMMVVFAIYSSIWFVVLASRLIGNRAI</sequence>
<accession>Q15S31</accession>
<protein>
    <recommendedName>
        <fullName evidence="1">Disulfide bond formation protein B</fullName>
    </recommendedName>
    <alternativeName>
        <fullName evidence="1">Disulfide oxidoreductase</fullName>
    </alternativeName>
</protein>